<proteinExistence type="evidence at transcript level"/>
<comment type="function">
    <text evidence="1">May be involved in gonadal development.</text>
</comment>
<comment type="subcellular location">
    <subcellularLocation>
        <location evidence="2">Nucleus</location>
    </subcellularLocation>
</comment>
<comment type="alternative products">
    <event type="alternative splicing"/>
    <isoform>
        <id>A2PZF9-1</id>
        <name>1</name>
        <sequence type="displayed"/>
    </isoform>
    <isoform>
        <id>A2PZF9-2</id>
        <name>2</name>
        <name>Beta</name>
        <sequence type="described" ref="VSP_036433"/>
    </isoform>
    <isoform>
        <id>A2PZF9-3</id>
        <name>3</name>
        <name>Alpha</name>
        <sequence type="described" ref="VSP_036434"/>
    </isoform>
    <isoform>
        <id>A2PZF9-4</id>
        <name>4</name>
        <name>Gamma</name>
        <sequence type="described" ref="VSP_036435"/>
    </isoform>
    <isoform>
        <id>A2PZF9-5</id>
        <name>5</name>
        <name>Delta</name>
        <sequence type="described" ref="VSP_036436"/>
    </isoform>
</comment>
<comment type="tissue specificity">
    <text evidence="5">Isoform 1 and isoform 3 are expressed in ovary, testis, brain and heart. Isoform 4 and isoform 5 are expressed in brain.</text>
</comment>
<comment type="developmental stage">
    <text evidence="5">Isoform 1, isoform 3, isoform 4 and isoform 5 are expressed in the gonad/mesonephros complex at stage 25. Isoform 1 is expressed in somatic cells of the gonad mesonephros and somites of a tadpole at stage 25.</text>
</comment>
<protein>
    <recommendedName>
        <fullName>LIM/homeobox protein Lhx9</fullName>
        <shortName>LIM homeobox protein 9</shortName>
    </recommendedName>
</protein>
<keyword id="KW-0025">Alternative splicing</keyword>
<keyword id="KW-0238">DNA-binding</keyword>
<keyword id="KW-0371">Homeobox</keyword>
<keyword id="KW-0440">LIM domain</keyword>
<keyword id="KW-0479">Metal-binding</keyword>
<keyword id="KW-0539">Nucleus</keyword>
<keyword id="KW-0677">Repeat</keyword>
<keyword id="KW-0862">Zinc</keyword>
<sequence length="379" mass="42078">MLFHGITGGHIQGIMEEMERRSKSADNRLAKTIQVNGRETRMPPLSPEKPTLCAGCGGKISDRYYLLAVDKQWHLRCLKCCECKLALESELTCFAKDGSIYCKEDYYRRFSVQRCARCHLGISASEIVMRARESVYHLSCFTCTTCNKTLSTGDHFGMKENLVYRRAHFELLVQGDFHSQLNYTELSAKGGGLSALPYFTNGTGAVQKGRPRKRKSPALGVDIINYTSGCNENDTDLDRDQSYPPSQKTKRMRTSFKHHQLRTTKSYFAINHNPDAKDLKQLAQKTGLTKRVLQVWFQNARAKFRRNLLRQENGGGDKVEGPSLSAPASTDSAALTPTGAASTLSDLTSPSLNVGASVTPNMDSHESGSPSQTTLTNLF</sequence>
<gene>
    <name type="primary">lhx9</name>
</gene>
<feature type="chain" id="PRO_0000364232" description="LIM/homeobox protein Lhx9">
    <location>
        <begin position="1"/>
        <end position="379"/>
    </location>
</feature>
<feature type="domain" description="LIM zinc-binding 1" evidence="3">
    <location>
        <begin position="51"/>
        <end position="112"/>
    </location>
</feature>
<feature type="domain" description="LIM zinc-binding 2" evidence="3">
    <location>
        <begin position="113"/>
        <end position="175"/>
    </location>
</feature>
<feature type="DNA-binding region" description="Homeobox" evidence="2">
    <location>
        <begin position="249"/>
        <end position="308"/>
    </location>
</feature>
<feature type="region of interest" description="Disordered" evidence="4">
    <location>
        <begin position="232"/>
        <end position="257"/>
    </location>
</feature>
<feature type="region of interest" description="Disordered" evidence="4">
    <location>
        <begin position="310"/>
        <end position="379"/>
    </location>
</feature>
<feature type="compositionally biased region" description="Basic residues" evidence="4">
    <location>
        <begin position="248"/>
        <end position="257"/>
    </location>
</feature>
<feature type="compositionally biased region" description="Polar residues" evidence="4">
    <location>
        <begin position="326"/>
        <end position="379"/>
    </location>
</feature>
<feature type="splice variant" id="VSP_036433" description="In isoform 2." evidence="6">
    <original>VWFQNARAKFRRNLLRQENGGGDKVEGPSLSAPASTDSAALTPTGAASTLSDLTSPSLNVGASVTPNMDSHESGSPSQTTLTNLF</original>
    <variation>EVCYWPDDQVKTEGKKLKKRKLMQPPHLMIGLVSKRTGEIQKESFTTGEWGRR</variation>
    <location>
        <begin position="295"/>
        <end position="379"/>
    </location>
</feature>
<feature type="splice variant" id="VSP_036434" description="In isoform 3." evidence="6">
    <original>VWFQNARAKFRRNLLRQENGGGDKVEGPSLSAPASTDSAALTPTGAASTLSDLTSPSLNVGASVTPNMDSHESGSPSQTTLTNLF</original>
    <variation>GEQCSGFNSHTTRRLKIP</variation>
    <location>
        <begin position="295"/>
        <end position="379"/>
    </location>
</feature>
<feature type="splice variant" id="VSP_036435" description="In isoform 4." evidence="6">
    <original>VWFQNARAKFRRNLLRQENGGGDKVEGPSLSAPASTDSAALTPTGAASTLSDLTSPSLNVGASVTPNMDSHESGSPSQTTLTNLF</original>
    <variation>EVCYWPDDQVKTEGKKSKKRKLMQPPHLMIGRTMFGV</variation>
    <location>
        <begin position="295"/>
        <end position="379"/>
    </location>
</feature>
<feature type="splice variant" id="VSP_036436" description="In isoform 5." evidence="6">
    <original>VWFQNARAKFRRNLLRQENGGGDKVEGPSLSAPASTDSAALTPTGAASTLSDLTSPSLNVGASVTPNMDSHESGSPSQTTLTNLF</original>
    <variation>NVS</variation>
    <location>
        <begin position="295"/>
        <end position="379"/>
    </location>
</feature>
<feature type="sequence conflict" description="In Ref. 1; BAF46218." evidence="7" ref="1">
    <original>T</original>
    <variation>M</variation>
    <location>
        <position position="264"/>
    </location>
</feature>
<feature type="sequence conflict" description="In Ref. 1; BAF46218." evidence="7" ref="1">
    <original>K</original>
    <variation>R</variation>
    <location>
        <position position="280"/>
    </location>
</feature>
<feature type="sequence conflict" description="In Ref. 1; BAF46220." evidence="7" ref="1">
    <original>G</original>
    <variation>R</variation>
    <location>
        <position position="287"/>
    </location>
</feature>
<reference key="1">
    <citation type="journal article" date="2007" name="Zool. Sci.">
        <title>Expression of Lhx9 isoforms in the developing gonads of Rana rugosa.</title>
        <authorList>
            <person name="Oshima Y."/>
            <person name="Noguchi K."/>
            <person name="Nakamura M."/>
        </authorList>
    </citation>
    <scope>NUCLEOTIDE SEQUENCE [MRNA] (ISOFORMS 1; 2; 3; 4 AND 5)</scope>
    <scope>TISSUE SPECIFICITY</scope>
    <scope>DEVELOPMENTAL STAGE</scope>
</reference>
<dbReference type="EMBL" id="AB269882">
    <property type="protein sequence ID" value="BAF46216.1"/>
    <property type="molecule type" value="mRNA"/>
</dbReference>
<dbReference type="EMBL" id="AB269883">
    <property type="protein sequence ID" value="BAF46217.1"/>
    <property type="molecule type" value="mRNA"/>
</dbReference>
<dbReference type="EMBL" id="AB269884">
    <property type="protein sequence ID" value="BAF46218.1"/>
    <property type="molecule type" value="mRNA"/>
</dbReference>
<dbReference type="EMBL" id="AB269885">
    <property type="protein sequence ID" value="BAF46219.1"/>
    <property type="molecule type" value="mRNA"/>
</dbReference>
<dbReference type="EMBL" id="AB269886">
    <property type="protein sequence ID" value="BAF46220.1"/>
    <property type="molecule type" value="mRNA"/>
</dbReference>
<dbReference type="SMR" id="A2PZF9"/>
<dbReference type="GO" id="GO:0005634">
    <property type="term" value="C:nucleus"/>
    <property type="evidence" value="ECO:0007669"/>
    <property type="project" value="UniProtKB-SubCell"/>
</dbReference>
<dbReference type="GO" id="GO:0000981">
    <property type="term" value="F:DNA-binding transcription factor activity, RNA polymerase II-specific"/>
    <property type="evidence" value="ECO:0007669"/>
    <property type="project" value="InterPro"/>
</dbReference>
<dbReference type="GO" id="GO:0046872">
    <property type="term" value="F:metal ion binding"/>
    <property type="evidence" value="ECO:0007669"/>
    <property type="project" value="UniProtKB-KW"/>
</dbReference>
<dbReference type="GO" id="GO:0000977">
    <property type="term" value="F:RNA polymerase II transcription regulatory region sequence-specific DNA binding"/>
    <property type="evidence" value="ECO:0007669"/>
    <property type="project" value="TreeGrafter"/>
</dbReference>
<dbReference type="GO" id="GO:0097380">
    <property type="term" value="P:dorsal spinal cord interneuron anterior axon guidance"/>
    <property type="evidence" value="ECO:0000250"/>
    <property type="project" value="UniProtKB"/>
</dbReference>
<dbReference type="GO" id="GO:0045892">
    <property type="term" value="P:negative regulation of DNA-templated transcription"/>
    <property type="evidence" value="ECO:0000250"/>
    <property type="project" value="UniProtKB"/>
</dbReference>
<dbReference type="CDD" id="cd00086">
    <property type="entry name" value="homeodomain"/>
    <property type="match status" value="1"/>
</dbReference>
<dbReference type="CDD" id="cd09369">
    <property type="entry name" value="LIM1_Lhx2_Lhx9"/>
    <property type="match status" value="1"/>
</dbReference>
<dbReference type="CDD" id="cd09377">
    <property type="entry name" value="LIM2_Lhx2_Lhx9"/>
    <property type="match status" value="1"/>
</dbReference>
<dbReference type="FunFam" id="1.10.10.60:FF:000027">
    <property type="entry name" value="LIM/homeobox protein Lhx9"/>
    <property type="match status" value="1"/>
</dbReference>
<dbReference type="FunFam" id="2.10.110.10:FF:000039">
    <property type="entry name" value="LIM/homeobox protein Lhx9 isoform 2"/>
    <property type="match status" value="1"/>
</dbReference>
<dbReference type="FunFam" id="2.10.110.10:FF:000033">
    <property type="entry name" value="LIM/homeobox protein Lhx9 isoform X2"/>
    <property type="match status" value="1"/>
</dbReference>
<dbReference type="Gene3D" id="2.10.110.10">
    <property type="entry name" value="Cysteine Rich Protein"/>
    <property type="match status" value="2"/>
</dbReference>
<dbReference type="Gene3D" id="1.10.10.60">
    <property type="entry name" value="Homeodomain-like"/>
    <property type="match status" value="1"/>
</dbReference>
<dbReference type="InterPro" id="IPR001356">
    <property type="entry name" value="HD"/>
</dbReference>
<dbReference type="InterPro" id="IPR017970">
    <property type="entry name" value="Homeobox_CS"/>
</dbReference>
<dbReference type="InterPro" id="IPR009057">
    <property type="entry name" value="Homeodomain-like_sf"/>
</dbReference>
<dbReference type="InterPro" id="IPR050453">
    <property type="entry name" value="LIM_Homeobox_TF"/>
</dbReference>
<dbReference type="InterPro" id="IPR001781">
    <property type="entry name" value="Znf_LIM"/>
</dbReference>
<dbReference type="PANTHER" id="PTHR24208">
    <property type="entry name" value="LIM/HOMEOBOX PROTEIN LHX"/>
    <property type="match status" value="1"/>
</dbReference>
<dbReference type="PANTHER" id="PTHR24208:SF95">
    <property type="entry name" value="LIM_HOMEOBOX PROTEIN LHX9"/>
    <property type="match status" value="1"/>
</dbReference>
<dbReference type="Pfam" id="PF00046">
    <property type="entry name" value="Homeodomain"/>
    <property type="match status" value="1"/>
</dbReference>
<dbReference type="Pfam" id="PF00412">
    <property type="entry name" value="LIM"/>
    <property type="match status" value="2"/>
</dbReference>
<dbReference type="SMART" id="SM00389">
    <property type="entry name" value="HOX"/>
    <property type="match status" value="1"/>
</dbReference>
<dbReference type="SMART" id="SM00132">
    <property type="entry name" value="LIM"/>
    <property type="match status" value="2"/>
</dbReference>
<dbReference type="SUPFAM" id="SSF57716">
    <property type="entry name" value="Glucocorticoid receptor-like (DNA-binding domain)"/>
    <property type="match status" value="2"/>
</dbReference>
<dbReference type="SUPFAM" id="SSF46689">
    <property type="entry name" value="Homeodomain-like"/>
    <property type="match status" value="1"/>
</dbReference>
<dbReference type="PROSITE" id="PS00027">
    <property type="entry name" value="HOMEOBOX_1"/>
    <property type="match status" value="1"/>
</dbReference>
<dbReference type="PROSITE" id="PS50071">
    <property type="entry name" value="HOMEOBOX_2"/>
    <property type="match status" value="1"/>
</dbReference>
<dbReference type="PROSITE" id="PS00478">
    <property type="entry name" value="LIM_DOMAIN_1"/>
    <property type="match status" value="2"/>
</dbReference>
<dbReference type="PROSITE" id="PS50023">
    <property type="entry name" value="LIM_DOMAIN_2"/>
    <property type="match status" value="2"/>
</dbReference>
<organism>
    <name type="scientific">Glandirana rugosa</name>
    <name type="common">Japanese wrinkled frog</name>
    <name type="synonym">Rana rugosa</name>
    <dbReference type="NCBI Taxonomy" id="8410"/>
    <lineage>
        <taxon>Eukaryota</taxon>
        <taxon>Metazoa</taxon>
        <taxon>Chordata</taxon>
        <taxon>Craniata</taxon>
        <taxon>Vertebrata</taxon>
        <taxon>Euteleostomi</taxon>
        <taxon>Amphibia</taxon>
        <taxon>Batrachia</taxon>
        <taxon>Anura</taxon>
        <taxon>Neobatrachia</taxon>
        <taxon>Ranoidea</taxon>
        <taxon>Ranidae</taxon>
        <taxon>Glandirana</taxon>
    </lineage>
</organism>
<evidence type="ECO:0000250" key="1"/>
<evidence type="ECO:0000255" key="2">
    <source>
        <dbReference type="PROSITE-ProRule" id="PRU00108"/>
    </source>
</evidence>
<evidence type="ECO:0000255" key="3">
    <source>
        <dbReference type="PROSITE-ProRule" id="PRU00125"/>
    </source>
</evidence>
<evidence type="ECO:0000256" key="4">
    <source>
        <dbReference type="SAM" id="MobiDB-lite"/>
    </source>
</evidence>
<evidence type="ECO:0000269" key="5">
    <source>
    </source>
</evidence>
<evidence type="ECO:0000303" key="6">
    <source>
    </source>
</evidence>
<evidence type="ECO:0000305" key="7"/>
<name>LHX9_GLARU</name>
<accession>A2PZF9</accession>
<accession>A2PZG0</accession>
<accession>A2PZG1</accession>
<accession>A2PZG2</accession>
<accession>A2PZG3</accession>